<reference key="1">
    <citation type="journal article" date="2007" name="Science">
        <title>Genome sequence of Aedes aegypti, a major arbovirus vector.</title>
        <authorList>
            <person name="Nene V."/>
            <person name="Wortman J.R."/>
            <person name="Lawson D."/>
            <person name="Haas B.J."/>
            <person name="Kodira C.D."/>
            <person name="Tu Z.J."/>
            <person name="Loftus B.J."/>
            <person name="Xi Z."/>
            <person name="Megy K."/>
            <person name="Grabherr M."/>
            <person name="Ren Q."/>
            <person name="Zdobnov E.M."/>
            <person name="Lobo N.F."/>
            <person name="Campbell K.S."/>
            <person name="Brown S.E."/>
            <person name="Bonaldo M.F."/>
            <person name="Zhu J."/>
            <person name="Sinkins S.P."/>
            <person name="Hogenkamp D.G."/>
            <person name="Amedeo P."/>
            <person name="Arensburger P."/>
            <person name="Atkinson P.W."/>
            <person name="Bidwell S.L."/>
            <person name="Biedler J."/>
            <person name="Birney E."/>
            <person name="Bruggner R.V."/>
            <person name="Costas J."/>
            <person name="Coy M.R."/>
            <person name="Crabtree J."/>
            <person name="Crawford M."/>
            <person name="DeBruyn B."/>
            <person name="DeCaprio D."/>
            <person name="Eiglmeier K."/>
            <person name="Eisenstadt E."/>
            <person name="El-Dorry H."/>
            <person name="Gelbart W.M."/>
            <person name="Gomes S.L."/>
            <person name="Hammond M."/>
            <person name="Hannick L.I."/>
            <person name="Hogan J.R."/>
            <person name="Holmes M.H."/>
            <person name="Jaffe D."/>
            <person name="Johnston S.J."/>
            <person name="Kennedy R.C."/>
            <person name="Koo H."/>
            <person name="Kravitz S."/>
            <person name="Kriventseva E.V."/>
            <person name="Kulp D."/>
            <person name="Labutti K."/>
            <person name="Lee E."/>
            <person name="Li S."/>
            <person name="Lovin D.D."/>
            <person name="Mao C."/>
            <person name="Mauceli E."/>
            <person name="Menck C.F."/>
            <person name="Miller J.R."/>
            <person name="Montgomery P."/>
            <person name="Mori A."/>
            <person name="Nascimento A.L."/>
            <person name="Naveira H.F."/>
            <person name="Nusbaum C."/>
            <person name="O'Leary S.B."/>
            <person name="Orvis J."/>
            <person name="Pertea M."/>
            <person name="Quesneville H."/>
            <person name="Reidenbach K.R."/>
            <person name="Rogers Y.-H.C."/>
            <person name="Roth C.W."/>
            <person name="Schneider J.R."/>
            <person name="Schatz M."/>
            <person name="Shumway M."/>
            <person name="Stanke M."/>
            <person name="Stinson E.O."/>
            <person name="Tubio J.M.C."/>
            <person name="Vanzee J.P."/>
            <person name="Verjovski-Almeida S."/>
            <person name="Werner D."/>
            <person name="White O.R."/>
            <person name="Wyder S."/>
            <person name="Zeng Q."/>
            <person name="Zhao Q."/>
            <person name="Zhao Y."/>
            <person name="Hill C.A."/>
            <person name="Raikhel A.S."/>
            <person name="Soares M.B."/>
            <person name="Knudson D.L."/>
            <person name="Lee N.H."/>
            <person name="Galagan J."/>
            <person name="Salzberg S.L."/>
            <person name="Paulsen I.T."/>
            <person name="Dimopoulos G."/>
            <person name="Collins F.H."/>
            <person name="Bruce B."/>
            <person name="Fraser-Liggett C.M."/>
            <person name="Severson D.W."/>
        </authorList>
    </citation>
    <scope>NUCLEOTIDE SEQUENCE [LARGE SCALE GENOMIC DNA]</scope>
    <source>
        <strain>LVPib12</strain>
    </source>
</reference>
<dbReference type="EMBL" id="CH477362">
    <property type="protein sequence ID" value="EAT42625.1"/>
    <property type="molecule type" value="Genomic_DNA"/>
</dbReference>
<dbReference type="RefSeq" id="XP_001651508.1">
    <property type="nucleotide sequence ID" value="XM_001651458.1"/>
</dbReference>
<dbReference type="SMR" id="Q178L7"/>
<dbReference type="FunCoup" id="Q178L7">
    <property type="interactions" value="1417"/>
</dbReference>
<dbReference type="STRING" id="7159.Q178L7"/>
<dbReference type="PaxDb" id="7159-AAEL005866-PA"/>
<dbReference type="KEGG" id="aag:5579833"/>
<dbReference type="VEuPathDB" id="VectorBase:AAEL021191"/>
<dbReference type="eggNOG" id="KOG3326">
    <property type="taxonomic scope" value="Eukaryota"/>
</dbReference>
<dbReference type="HOGENOM" id="CLU_103054_0_3_1"/>
<dbReference type="InParanoid" id="Q178L7"/>
<dbReference type="OMA" id="YGKPQNP"/>
<dbReference type="OrthoDB" id="284292at2759"/>
<dbReference type="PhylomeDB" id="Q178L7"/>
<dbReference type="Proteomes" id="UP000008820">
    <property type="component" value="Unassembled WGS sequence"/>
</dbReference>
<dbReference type="Proteomes" id="UP000682892">
    <property type="component" value="Unassembled WGS sequence"/>
</dbReference>
<dbReference type="GO" id="GO:0005759">
    <property type="term" value="C:mitochondrial matrix"/>
    <property type="evidence" value="ECO:0007669"/>
    <property type="project" value="UniProtKB-SubCell"/>
</dbReference>
<dbReference type="GO" id="GO:0005739">
    <property type="term" value="C:mitochondrion"/>
    <property type="evidence" value="ECO:0000250"/>
    <property type="project" value="UniProtKB"/>
</dbReference>
<dbReference type="GO" id="GO:0006121">
    <property type="term" value="P:mitochondrial electron transport, succinate to ubiquinone"/>
    <property type="evidence" value="ECO:0000250"/>
    <property type="project" value="UniProtKB"/>
</dbReference>
<dbReference type="GO" id="GO:0034553">
    <property type="term" value="P:mitochondrial respiratory chain complex II assembly"/>
    <property type="evidence" value="ECO:0007669"/>
    <property type="project" value="TreeGrafter"/>
</dbReference>
<dbReference type="GO" id="GO:0018293">
    <property type="term" value="P:protein-FAD linkage"/>
    <property type="evidence" value="ECO:0000250"/>
    <property type="project" value="UniProtKB"/>
</dbReference>
<dbReference type="GO" id="GO:0006099">
    <property type="term" value="P:tricarboxylic acid cycle"/>
    <property type="evidence" value="ECO:0007669"/>
    <property type="project" value="TreeGrafter"/>
</dbReference>
<dbReference type="FunFam" id="1.10.150.250:FF:000002">
    <property type="entry name" value="Succinate dehydrogenase assembly factor 2, mitochondrial"/>
    <property type="match status" value="1"/>
</dbReference>
<dbReference type="Gene3D" id="1.10.150.250">
    <property type="entry name" value="Flavinator of succinate dehydrogenase"/>
    <property type="match status" value="1"/>
</dbReference>
<dbReference type="HAMAP" id="MF_03057">
    <property type="entry name" value="SDHAF2"/>
    <property type="match status" value="1"/>
</dbReference>
<dbReference type="InterPro" id="IPR005631">
    <property type="entry name" value="SDH"/>
</dbReference>
<dbReference type="InterPro" id="IPR036714">
    <property type="entry name" value="SDH_sf"/>
</dbReference>
<dbReference type="InterPro" id="IPR028882">
    <property type="entry name" value="SDHAF2"/>
</dbReference>
<dbReference type="PANTHER" id="PTHR12469">
    <property type="entry name" value="PROTEIN EMI5 HOMOLOG, MITOCHONDRIAL"/>
    <property type="match status" value="1"/>
</dbReference>
<dbReference type="PANTHER" id="PTHR12469:SF2">
    <property type="entry name" value="SUCCINATE DEHYDROGENASE ASSEMBLY FACTOR 2, MITOCHONDRIAL"/>
    <property type="match status" value="1"/>
</dbReference>
<dbReference type="Pfam" id="PF03937">
    <property type="entry name" value="Sdh5"/>
    <property type="match status" value="1"/>
</dbReference>
<dbReference type="SUPFAM" id="SSF109910">
    <property type="entry name" value="YgfY-like"/>
    <property type="match status" value="1"/>
</dbReference>
<comment type="function">
    <text evidence="1">Plays an essential role in the assembly of succinate dehydrogenase (SDH), an enzyme complex (also referred to as respiratory complex II) that is a component of both the tricarboxylic acid (TCA) cycle and the mitochondrial electron transport chain, and which couples the oxidation of succinate to fumarate with the reduction of ubiquinone (coenzyme Q) to ubiquinol. Required for flavinylation (covalent attachment of FAD) of the flavoprotein subunit of the SDH catalytic dimer.</text>
</comment>
<comment type="subunit">
    <text evidence="1">Interacts with the flavoprotein subunit within the SDH catalytic dimer.</text>
</comment>
<comment type="subcellular location">
    <subcellularLocation>
        <location evidence="1">Mitochondrion matrix</location>
    </subcellularLocation>
</comment>
<comment type="similarity">
    <text evidence="1">Belongs to the SDHAF2 family.</text>
</comment>
<sequence length="161" mass="18425">MSLLRVTRSSGHLSAVCRLPARSISTTSILLVPSNEGNKPPTPMIDLEDKSLPIPIYKEKKNEPLQLQKSRLLYQSRKRGMLENGLLLSTFAAKHLESMDVKQTKLYDQLINMPTNDWDIFYWATGVKPTPAEYDNEIMALLKDHVKNANREKRICQPNLY</sequence>
<protein>
    <recommendedName>
        <fullName evidence="1">Succinate dehydrogenase assembly factor 2, mitochondrial</fullName>
        <shortName evidence="1">SDH assembly factor 2</shortName>
        <shortName evidence="1">SDHAF2</shortName>
    </recommendedName>
</protein>
<keyword id="KW-0143">Chaperone</keyword>
<keyword id="KW-0496">Mitochondrion</keyword>
<keyword id="KW-1185">Reference proteome</keyword>
<keyword id="KW-0809">Transit peptide</keyword>
<organism>
    <name type="scientific">Aedes aegypti</name>
    <name type="common">Yellowfever mosquito</name>
    <name type="synonym">Culex aegypti</name>
    <dbReference type="NCBI Taxonomy" id="7159"/>
    <lineage>
        <taxon>Eukaryota</taxon>
        <taxon>Metazoa</taxon>
        <taxon>Ecdysozoa</taxon>
        <taxon>Arthropoda</taxon>
        <taxon>Hexapoda</taxon>
        <taxon>Insecta</taxon>
        <taxon>Pterygota</taxon>
        <taxon>Neoptera</taxon>
        <taxon>Endopterygota</taxon>
        <taxon>Diptera</taxon>
        <taxon>Nematocera</taxon>
        <taxon>Culicoidea</taxon>
        <taxon>Culicidae</taxon>
        <taxon>Culicinae</taxon>
        <taxon>Aedini</taxon>
        <taxon>Aedes</taxon>
        <taxon>Stegomyia</taxon>
    </lineage>
</organism>
<name>SDHF2_AEDAE</name>
<feature type="transit peptide" description="Mitochondrion" evidence="1">
    <location>
        <begin position="1"/>
        <end position="31"/>
    </location>
</feature>
<feature type="chain" id="PRO_0000383159" description="Succinate dehydrogenase assembly factor 2, mitochondrial">
    <location>
        <begin position="32"/>
        <end position="161"/>
    </location>
</feature>
<accession>Q178L7</accession>
<proteinExistence type="inferred from homology"/>
<evidence type="ECO:0000255" key="1">
    <source>
        <dbReference type="HAMAP-Rule" id="MF_03057"/>
    </source>
</evidence>
<gene>
    <name type="ORF">AAEL005866</name>
</gene>